<organism>
    <name type="scientific">Prochlorococcus marinus (strain MIT 9515)</name>
    <dbReference type="NCBI Taxonomy" id="167542"/>
    <lineage>
        <taxon>Bacteria</taxon>
        <taxon>Bacillati</taxon>
        <taxon>Cyanobacteriota</taxon>
        <taxon>Cyanophyceae</taxon>
        <taxon>Synechococcales</taxon>
        <taxon>Prochlorococcaceae</taxon>
        <taxon>Prochlorococcus</taxon>
    </lineage>
</organism>
<comment type="function">
    <text evidence="1">Single strand-specific metallo-endoribonuclease involved in late-stage 70S ribosome quality control and in maturation of the 3' terminus of the 16S rRNA.</text>
</comment>
<comment type="cofactor">
    <cofactor evidence="1">
        <name>Zn(2+)</name>
        <dbReference type="ChEBI" id="CHEBI:29105"/>
    </cofactor>
    <text evidence="1">Binds 1 zinc ion.</text>
</comment>
<comment type="subcellular location">
    <subcellularLocation>
        <location evidence="1">Cytoplasm</location>
    </subcellularLocation>
</comment>
<comment type="similarity">
    <text evidence="1">Belongs to the endoribonuclease YbeY family.</text>
</comment>
<comment type="sequence caution" evidence="2">
    <conflict type="erroneous initiation">
        <sequence resource="EMBL-CDS" id="ABM71420"/>
    </conflict>
</comment>
<dbReference type="EC" id="3.1.-.-" evidence="1"/>
<dbReference type="EMBL" id="CP000552">
    <property type="protein sequence ID" value="ABM71420.1"/>
    <property type="status" value="ALT_INIT"/>
    <property type="molecule type" value="Genomic_DNA"/>
</dbReference>
<dbReference type="RefSeq" id="WP_041710542.1">
    <property type="nucleotide sequence ID" value="NC_008817.1"/>
</dbReference>
<dbReference type="SMR" id="A2BUF9"/>
<dbReference type="STRING" id="167542.P9515_02111"/>
<dbReference type="GeneID" id="60200647"/>
<dbReference type="KEGG" id="pmc:P9515_02111"/>
<dbReference type="eggNOG" id="COG0319">
    <property type="taxonomic scope" value="Bacteria"/>
</dbReference>
<dbReference type="HOGENOM" id="CLU_106710_3_0_3"/>
<dbReference type="OrthoDB" id="9807740at2"/>
<dbReference type="Proteomes" id="UP000001589">
    <property type="component" value="Chromosome"/>
</dbReference>
<dbReference type="GO" id="GO:0005737">
    <property type="term" value="C:cytoplasm"/>
    <property type="evidence" value="ECO:0007669"/>
    <property type="project" value="UniProtKB-SubCell"/>
</dbReference>
<dbReference type="GO" id="GO:0004222">
    <property type="term" value="F:metalloendopeptidase activity"/>
    <property type="evidence" value="ECO:0007669"/>
    <property type="project" value="InterPro"/>
</dbReference>
<dbReference type="GO" id="GO:0004521">
    <property type="term" value="F:RNA endonuclease activity"/>
    <property type="evidence" value="ECO:0007669"/>
    <property type="project" value="UniProtKB-UniRule"/>
</dbReference>
<dbReference type="GO" id="GO:0008270">
    <property type="term" value="F:zinc ion binding"/>
    <property type="evidence" value="ECO:0007669"/>
    <property type="project" value="UniProtKB-UniRule"/>
</dbReference>
<dbReference type="GO" id="GO:0006364">
    <property type="term" value="P:rRNA processing"/>
    <property type="evidence" value="ECO:0007669"/>
    <property type="project" value="UniProtKB-UniRule"/>
</dbReference>
<dbReference type="Gene3D" id="3.40.390.30">
    <property type="entry name" value="Metalloproteases ('zincins'), catalytic domain"/>
    <property type="match status" value="1"/>
</dbReference>
<dbReference type="HAMAP" id="MF_00009">
    <property type="entry name" value="Endoribonucl_YbeY"/>
    <property type="match status" value="1"/>
</dbReference>
<dbReference type="InterPro" id="IPR023091">
    <property type="entry name" value="MetalPrtase_cat_dom_sf_prd"/>
</dbReference>
<dbReference type="InterPro" id="IPR002036">
    <property type="entry name" value="YbeY"/>
</dbReference>
<dbReference type="InterPro" id="IPR020549">
    <property type="entry name" value="YbeY_CS"/>
</dbReference>
<dbReference type="NCBIfam" id="TIGR00043">
    <property type="entry name" value="rRNA maturation RNase YbeY"/>
    <property type="match status" value="1"/>
</dbReference>
<dbReference type="PANTHER" id="PTHR46986">
    <property type="entry name" value="ENDORIBONUCLEASE YBEY, CHLOROPLASTIC"/>
    <property type="match status" value="1"/>
</dbReference>
<dbReference type="PANTHER" id="PTHR46986:SF1">
    <property type="entry name" value="ENDORIBONUCLEASE YBEY, CHLOROPLASTIC"/>
    <property type="match status" value="1"/>
</dbReference>
<dbReference type="Pfam" id="PF02130">
    <property type="entry name" value="YbeY"/>
    <property type="match status" value="1"/>
</dbReference>
<dbReference type="SUPFAM" id="SSF55486">
    <property type="entry name" value="Metalloproteases ('zincins'), catalytic domain"/>
    <property type="match status" value="1"/>
</dbReference>
<dbReference type="PROSITE" id="PS01306">
    <property type="entry name" value="UPF0054"/>
    <property type="match status" value="1"/>
</dbReference>
<accession>A2BUF9</accession>
<sequence length="180" mass="21095">MYQKDNASLQIDLVFKCNDFSNLSDPFLYQPGNLIFESSFWEEVLLCWINIILSEKNTSFPNFIFDKKIFSLSLQIINNNEISSINQKWMDKSGPTDVLSFPMISDEDTTKNLNFIELGDLFISLEMAFQQSLEFDHSIKKEMLWLASHGFLHLLGWEHNDDNELDNMLNFQEYLISKLD</sequence>
<evidence type="ECO:0000255" key="1">
    <source>
        <dbReference type="HAMAP-Rule" id="MF_00009"/>
    </source>
</evidence>
<evidence type="ECO:0000305" key="2"/>
<feature type="chain" id="PRO_0000284271" description="Endoribonuclease YbeY">
    <location>
        <begin position="1"/>
        <end position="180"/>
    </location>
</feature>
<feature type="binding site" evidence="1">
    <location>
        <position position="149"/>
    </location>
    <ligand>
        <name>Zn(2+)</name>
        <dbReference type="ChEBI" id="CHEBI:29105"/>
        <note>catalytic</note>
    </ligand>
</feature>
<feature type="binding site" evidence="1">
    <location>
        <position position="153"/>
    </location>
    <ligand>
        <name>Zn(2+)</name>
        <dbReference type="ChEBI" id="CHEBI:29105"/>
        <note>catalytic</note>
    </ligand>
</feature>
<feature type="binding site" evidence="1">
    <location>
        <position position="159"/>
    </location>
    <ligand>
        <name>Zn(2+)</name>
        <dbReference type="ChEBI" id="CHEBI:29105"/>
        <note>catalytic</note>
    </ligand>
</feature>
<name>YBEY_PROM5</name>
<keyword id="KW-0963">Cytoplasm</keyword>
<keyword id="KW-0255">Endonuclease</keyword>
<keyword id="KW-0378">Hydrolase</keyword>
<keyword id="KW-0479">Metal-binding</keyword>
<keyword id="KW-0540">Nuclease</keyword>
<keyword id="KW-0690">Ribosome biogenesis</keyword>
<keyword id="KW-0698">rRNA processing</keyword>
<keyword id="KW-0862">Zinc</keyword>
<gene>
    <name evidence="1" type="primary">ybeY</name>
    <name type="ordered locus">P9515_02111</name>
</gene>
<reference key="1">
    <citation type="journal article" date="2007" name="PLoS Genet.">
        <title>Patterns and implications of gene gain and loss in the evolution of Prochlorococcus.</title>
        <authorList>
            <person name="Kettler G.C."/>
            <person name="Martiny A.C."/>
            <person name="Huang K."/>
            <person name="Zucker J."/>
            <person name="Coleman M.L."/>
            <person name="Rodrigue S."/>
            <person name="Chen F."/>
            <person name="Lapidus A."/>
            <person name="Ferriera S."/>
            <person name="Johnson J."/>
            <person name="Steglich C."/>
            <person name="Church G.M."/>
            <person name="Richardson P."/>
            <person name="Chisholm S.W."/>
        </authorList>
    </citation>
    <scope>NUCLEOTIDE SEQUENCE [LARGE SCALE GENOMIC DNA]</scope>
    <source>
        <strain>MIT 9515</strain>
    </source>
</reference>
<proteinExistence type="inferred from homology"/>
<protein>
    <recommendedName>
        <fullName evidence="1">Endoribonuclease YbeY</fullName>
        <ecNumber evidence="1">3.1.-.-</ecNumber>
    </recommendedName>
</protein>